<sequence length="919" mass="102910">MKFAYRFSNLLGTVYRCGNLNFTHDGNSVISPVGNRVTVFDLKNNRSNTLPLATKYNIKCVGLSPDGRLAIIVDEGGAALLVSLVCRSVLHHFHFKGSVHSVSFSPDGRKFVVTKGNIAQMYHAPGKKREFNAFVLDKTYFGPYDETTCIDWTDDSKCFVVGSKDMSTWVFGAERWDNLIYYALSGHKDAIVACFFESNSLDLYSLSQDGALCVWQCDTPPEGLRLKAPRGWKADILQREKEEEEEDEEEGDRETTIRGKTTPAEQERVGKVKYSRLAKYFLNKEGDFNNLTSAAYHKKTHLLVTGFASGIFHLHELPEFNLIHSLSISDQRVASVAINSSGDWIAFGCSGMGQLLVWEWQSESYVLKQQGHFNSMVALAYSPDGQYIVTGGDDGKVKVWNTLSGFCFVTLTEHSSGVTGVTFTTTGHVIVTSSLDGTVRAFDLHRYRNFRTFTSPRPTQFSCVAVDSSGEIVSAGAQDSFEIFVWSMQTGRLLDVLSGHEGPVSGLCFNPMKSILASASWDKTVRLWDMFDSWRTKETLTLTSDALAVTFRPDGAELAVATLNSQITFWDPENAVQVGSIEGRHDLKTGRKELDKITAKHSAKGKAFTTLCYSADGQSILAGGMSKFVCLYHVREQILVKRFELSCNLSLDAMEEFLNRRKMTEFGNLALIDQDAGEENGVAVPLPGVRKGDMSSRHFKPEIRVTSLRFSPTGRCWAATSTEGLLIFSLDAQMLFDPFELDTSVTPGRIREALRQREFTRAILMAFRLNEKKLAQEALEAVPQNEIEVVSTSLPELYVVKVLEFLAASFEESRHLEFYLIWTQKLLMSHGQRLKSRAGQLLPVVQFLQKGLQRHLDDVSKLCDWNRFNIQYVLAVSKQRGMKRTLEPVDTEEDSDASDEDSLHLLRAAGEEEEEEMLI</sequence>
<reference key="1">
    <citation type="journal article" date="2005" name="Science">
        <title>The transcriptional landscape of the mammalian genome.</title>
        <authorList>
            <person name="Carninci P."/>
            <person name="Kasukawa T."/>
            <person name="Katayama S."/>
            <person name="Gough J."/>
            <person name="Frith M.C."/>
            <person name="Maeda N."/>
            <person name="Oyama R."/>
            <person name="Ravasi T."/>
            <person name="Lenhard B."/>
            <person name="Wells C."/>
            <person name="Kodzius R."/>
            <person name="Shimokawa K."/>
            <person name="Bajic V.B."/>
            <person name="Brenner S.E."/>
            <person name="Batalov S."/>
            <person name="Forrest A.R."/>
            <person name="Zavolan M."/>
            <person name="Davis M.J."/>
            <person name="Wilming L.G."/>
            <person name="Aidinis V."/>
            <person name="Allen J.E."/>
            <person name="Ambesi-Impiombato A."/>
            <person name="Apweiler R."/>
            <person name="Aturaliya R.N."/>
            <person name="Bailey T.L."/>
            <person name="Bansal M."/>
            <person name="Baxter L."/>
            <person name="Beisel K.W."/>
            <person name="Bersano T."/>
            <person name="Bono H."/>
            <person name="Chalk A.M."/>
            <person name="Chiu K.P."/>
            <person name="Choudhary V."/>
            <person name="Christoffels A."/>
            <person name="Clutterbuck D.R."/>
            <person name="Crowe M.L."/>
            <person name="Dalla E."/>
            <person name="Dalrymple B.P."/>
            <person name="de Bono B."/>
            <person name="Della Gatta G."/>
            <person name="di Bernardo D."/>
            <person name="Down T."/>
            <person name="Engstrom P."/>
            <person name="Fagiolini M."/>
            <person name="Faulkner G."/>
            <person name="Fletcher C.F."/>
            <person name="Fukushima T."/>
            <person name="Furuno M."/>
            <person name="Futaki S."/>
            <person name="Gariboldi M."/>
            <person name="Georgii-Hemming P."/>
            <person name="Gingeras T.R."/>
            <person name="Gojobori T."/>
            <person name="Green R.E."/>
            <person name="Gustincich S."/>
            <person name="Harbers M."/>
            <person name="Hayashi Y."/>
            <person name="Hensch T.K."/>
            <person name="Hirokawa N."/>
            <person name="Hill D."/>
            <person name="Huminiecki L."/>
            <person name="Iacono M."/>
            <person name="Ikeo K."/>
            <person name="Iwama A."/>
            <person name="Ishikawa T."/>
            <person name="Jakt M."/>
            <person name="Kanapin A."/>
            <person name="Katoh M."/>
            <person name="Kawasawa Y."/>
            <person name="Kelso J."/>
            <person name="Kitamura H."/>
            <person name="Kitano H."/>
            <person name="Kollias G."/>
            <person name="Krishnan S.P."/>
            <person name="Kruger A."/>
            <person name="Kummerfeld S.K."/>
            <person name="Kurochkin I.V."/>
            <person name="Lareau L.F."/>
            <person name="Lazarevic D."/>
            <person name="Lipovich L."/>
            <person name="Liu J."/>
            <person name="Liuni S."/>
            <person name="McWilliam S."/>
            <person name="Madan Babu M."/>
            <person name="Madera M."/>
            <person name="Marchionni L."/>
            <person name="Matsuda H."/>
            <person name="Matsuzawa S."/>
            <person name="Miki H."/>
            <person name="Mignone F."/>
            <person name="Miyake S."/>
            <person name="Morris K."/>
            <person name="Mottagui-Tabar S."/>
            <person name="Mulder N."/>
            <person name="Nakano N."/>
            <person name="Nakauchi H."/>
            <person name="Ng P."/>
            <person name="Nilsson R."/>
            <person name="Nishiguchi S."/>
            <person name="Nishikawa S."/>
            <person name="Nori F."/>
            <person name="Ohara O."/>
            <person name="Okazaki Y."/>
            <person name="Orlando V."/>
            <person name="Pang K.C."/>
            <person name="Pavan W.J."/>
            <person name="Pavesi G."/>
            <person name="Pesole G."/>
            <person name="Petrovsky N."/>
            <person name="Piazza S."/>
            <person name="Reed J."/>
            <person name="Reid J.F."/>
            <person name="Ring B.Z."/>
            <person name="Ringwald M."/>
            <person name="Rost B."/>
            <person name="Ruan Y."/>
            <person name="Salzberg S.L."/>
            <person name="Sandelin A."/>
            <person name="Schneider C."/>
            <person name="Schoenbach C."/>
            <person name="Sekiguchi K."/>
            <person name="Semple C.A."/>
            <person name="Seno S."/>
            <person name="Sessa L."/>
            <person name="Sheng Y."/>
            <person name="Shibata Y."/>
            <person name="Shimada H."/>
            <person name="Shimada K."/>
            <person name="Silva D."/>
            <person name="Sinclair B."/>
            <person name="Sperling S."/>
            <person name="Stupka E."/>
            <person name="Sugiura K."/>
            <person name="Sultana R."/>
            <person name="Takenaka Y."/>
            <person name="Taki K."/>
            <person name="Tammoja K."/>
            <person name="Tan S.L."/>
            <person name="Tang S."/>
            <person name="Taylor M.S."/>
            <person name="Tegner J."/>
            <person name="Teichmann S.A."/>
            <person name="Ueda H.R."/>
            <person name="van Nimwegen E."/>
            <person name="Verardo R."/>
            <person name="Wei C.L."/>
            <person name="Yagi K."/>
            <person name="Yamanishi H."/>
            <person name="Zabarovsky E."/>
            <person name="Zhu S."/>
            <person name="Zimmer A."/>
            <person name="Hide W."/>
            <person name="Bult C."/>
            <person name="Grimmond S.M."/>
            <person name="Teasdale R.D."/>
            <person name="Liu E.T."/>
            <person name="Brusic V."/>
            <person name="Quackenbush J."/>
            <person name="Wahlestedt C."/>
            <person name="Mattick J.S."/>
            <person name="Hume D.A."/>
            <person name="Kai C."/>
            <person name="Sasaki D."/>
            <person name="Tomaru Y."/>
            <person name="Fukuda S."/>
            <person name="Kanamori-Katayama M."/>
            <person name="Suzuki M."/>
            <person name="Aoki J."/>
            <person name="Arakawa T."/>
            <person name="Iida J."/>
            <person name="Imamura K."/>
            <person name="Itoh M."/>
            <person name="Kato T."/>
            <person name="Kawaji H."/>
            <person name="Kawagashira N."/>
            <person name="Kawashima T."/>
            <person name="Kojima M."/>
            <person name="Kondo S."/>
            <person name="Konno H."/>
            <person name="Nakano K."/>
            <person name="Ninomiya N."/>
            <person name="Nishio T."/>
            <person name="Okada M."/>
            <person name="Plessy C."/>
            <person name="Shibata K."/>
            <person name="Shiraki T."/>
            <person name="Suzuki S."/>
            <person name="Tagami M."/>
            <person name="Waki K."/>
            <person name="Watahiki A."/>
            <person name="Okamura-Oho Y."/>
            <person name="Suzuki H."/>
            <person name="Kawai J."/>
            <person name="Hayashizaki Y."/>
        </authorList>
    </citation>
    <scope>NUCLEOTIDE SEQUENCE [LARGE SCALE MRNA]</scope>
    <source>
        <strain>NOD</strain>
        <tissue>Thymus</tissue>
    </source>
</reference>
<reference key="2">
    <citation type="journal article" date="2007" name="Proc. Natl. Acad. Sci. U.S.A.">
        <title>Large-scale phosphorylation analysis of mouse liver.</title>
        <authorList>
            <person name="Villen J."/>
            <person name="Beausoleil S.A."/>
            <person name="Gerber S.A."/>
            <person name="Gygi S.P."/>
        </authorList>
    </citation>
    <scope>PHOSPHORYLATION [LARGE SCALE ANALYSIS] AT SER-895</scope>
    <scope>IDENTIFICATION BY MASS SPECTROMETRY [LARGE SCALE ANALYSIS]</scope>
    <source>
        <tissue>Liver</tissue>
    </source>
</reference>
<reference key="3">
    <citation type="journal article" date="2010" name="Cell">
        <title>A tissue-specific atlas of mouse protein phosphorylation and expression.</title>
        <authorList>
            <person name="Huttlin E.L."/>
            <person name="Jedrychowski M.P."/>
            <person name="Elias J.E."/>
            <person name="Goswami T."/>
            <person name="Rad R."/>
            <person name="Beausoleil S.A."/>
            <person name="Villen J."/>
            <person name="Haas W."/>
            <person name="Sowa M.E."/>
            <person name="Gygi S.P."/>
        </authorList>
    </citation>
    <scope>PHOSPHORYLATION [LARGE SCALE ANALYSIS] AT THR-891; SER-895; SER-898 AND SER-902</scope>
    <scope>IDENTIFICATION BY MASS SPECTROMETRY [LARGE SCALE ANALYSIS]</scope>
    <source>
        <tissue>Spleen</tissue>
        <tissue>Testis</tissue>
    </source>
</reference>
<reference key="4">
    <citation type="journal article" date="2013" name="Mol. Cell">
        <title>SIRT5-mediated lysine desuccinylation impacts diverse metabolic pathways.</title>
        <authorList>
            <person name="Park J."/>
            <person name="Chen Y."/>
            <person name="Tishkoff D.X."/>
            <person name="Peng C."/>
            <person name="Tan M."/>
            <person name="Dai L."/>
            <person name="Xie Z."/>
            <person name="Zhang Y."/>
            <person name="Zwaans B.M."/>
            <person name="Skinner M.E."/>
            <person name="Lombard D.B."/>
            <person name="Zhao Y."/>
        </authorList>
    </citation>
    <scope>ACETYLATION [LARGE SCALE ANALYSIS] AT LYS-55</scope>
    <scope>IDENTIFICATION BY MASS SPECTROMETRY [LARGE SCALE ANALYSIS]</scope>
    <source>
        <tissue>Embryonic fibroblast</tissue>
    </source>
</reference>
<protein>
    <recommendedName>
        <fullName>Periodic tryptophan protein 2 homolog</fullName>
    </recommendedName>
</protein>
<proteinExistence type="evidence at protein level"/>
<evidence type="ECO:0000250" key="1">
    <source>
        <dbReference type="UniProtKB" id="Q15269"/>
    </source>
</evidence>
<evidence type="ECO:0000256" key="2">
    <source>
        <dbReference type="SAM" id="MobiDB-lite"/>
    </source>
</evidence>
<evidence type="ECO:0000305" key="3"/>
<evidence type="ECO:0007744" key="4">
    <source>
    </source>
</evidence>
<evidence type="ECO:0007744" key="5">
    <source>
    </source>
</evidence>
<evidence type="ECO:0007744" key="6">
    <source>
    </source>
</evidence>
<dbReference type="EMBL" id="AK088254">
    <property type="protein sequence ID" value="BAC40239.1"/>
    <property type="molecule type" value="mRNA"/>
</dbReference>
<dbReference type="EMBL" id="AK088983">
    <property type="protein sequence ID" value="BAC40686.1"/>
    <property type="molecule type" value="mRNA"/>
</dbReference>
<dbReference type="CCDS" id="CCDS35958.1"/>
<dbReference type="RefSeq" id="NP_083822.1">
    <property type="nucleotide sequence ID" value="NM_029546.2"/>
</dbReference>
<dbReference type="SMR" id="Q8BU03"/>
<dbReference type="BioGRID" id="225929">
    <property type="interactions" value="41"/>
</dbReference>
<dbReference type="FunCoup" id="Q8BU03">
    <property type="interactions" value="535"/>
</dbReference>
<dbReference type="STRING" id="10090.ENSMUSP00000045812"/>
<dbReference type="GlyGen" id="Q8BU03">
    <property type="glycosylation" value="1 site, 1 O-linked glycan (1 site)"/>
</dbReference>
<dbReference type="iPTMnet" id="Q8BU03"/>
<dbReference type="PhosphoSitePlus" id="Q8BU03"/>
<dbReference type="SwissPalm" id="Q8BU03"/>
<dbReference type="jPOST" id="Q8BU03"/>
<dbReference type="PaxDb" id="10090-ENSMUSP00000045812"/>
<dbReference type="ProteomicsDB" id="301927"/>
<dbReference type="Pumba" id="Q8BU03"/>
<dbReference type="DNASU" id="110816"/>
<dbReference type="Ensembl" id="ENSMUST00000042556.11">
    <property type="protein sequence ID" value="ENSMUSP00000045812.10"/>
    <property type="gene ID" value="ENSMUSG00000032834.12"/>
</dbReference>
<dbReference type="GeneID" id="110816"/>
<dbReference type="KEGG" id="mmu:110816"/>
<dbReference type="UCSC" id="uc007fxk.1">
    <property type="organism name" value="mouse"/>
</dbReference>
<dbReference type="AGR" id="MGI:1341200"/>
<dbReference type="CTD" id="5822"/>
<dbReference type="MGI" id="MGI:1341200">
    <property type="gene designation" value="Pwp2"/>
</dbReference>
<dbReference type="VEuPathDB" id="HostDB:ENSMUSG00000032834"/>
<dbReference type="eggNOG" id="KOG0291">
    <property type="taxonomic scope" value="Eukaryota"/>
</dbReference>
<dbReference type="GeneTree" id="ENSGT00550000074981"/>
<dbReference type="HOGENOM" id="CLU_010458_0_0_1"/>
<dbReference type="InParanoid" id="Q8BU03"/>
<dbReference type="OMA" id="VYEWQSE"/>
<dbReference type="OrthoDB" id="3142434at2759"/>
<dbReference type="PhylomeDB" id="Q8BU03"/>
<dbReference type="TreeFam" id="TF300853"/>
<dbReference type="Reactome" id="R-MMU-6791226">
    <property type="pathway name" value="Major pathway of rRNA processing in the nucleolus and cytosol"/>
</dbReference>
<dbReference type="BioGRID-ORCS" id="110816">
    <property type="hits" value="28 hits in 80 CRISPR screens"/>
</dbReference>
<dbReference type="ChiTaRS" id="Pwp2">
    <property type="organism name" value="mouse"/>
</dbReference>
<dbReference type="PRO" id="PR:Q8BU03"/>
<dbReference type="Proteomes" id="UP000000589">
    <property type="component" value="Chromosome 10"/>
</dbReference>
<dbReference type="RNAct" id="Q8BU03">
    <property type="molecule type" value="protein"/>
</dbReference>
<dbReference type="Bgee" id="ENSMUSG00000032834">
    <property type="expression patterns" value="Expressed in primitive streak and 249 other cell types or tissues"/>
</dbReference>
<dbReference type="ExpressionAtlas" id="Q8BU03">
    <property type="expression patterns" value="baseline and differential"/>
</dbReference>
<dbReference type="GO" id="GO:0005730">
    <property type="term" value="C:nucleolus"/>
    <property type="evidence" value="ECO:0007669"/>
    <property type="project" value="UniProtKB-SubCell"/>
</dbReference>
<dbReference type="GO" id="GO:0032040">
    <property type="term" value="C:small-subunit processome"/>
    <property type="evidence" value="ECO:0000250"/>
    <property type="project" value="UniProtKB"/>
</dbReference>
<dbReference type="GO" id="GO:0042274">
    <property type="term" value="P:ribosomal small subunit biogenesis"/>
    <property type="evidence" value="ECO:0000250"/>
    <property type="project" value="UniProtKB"/>
</dbReference>
<dbReference type="CDD" id="cd00200">
    <property type="entry name" value="WD40"/>
    <property type="match status" value="1"/>
</dbReference>
<dbReference type="FunFam" id="2.130.10.10:FF:000216">
    <property type="entry name" value="Periodic tryptophan protein 2 homolog"/>
    <property type="match status" value="1"/>
</dbReference>
<dbReference type="FunFam" id="2.130.10.10:FF:000255">
    <property type="entry name" value="Periodic tryptophan protein 2 homolog"/>
    <property type="match status" value="1"/>
</dbReference>
<dbReference type="FunFam" id="2.130.10.10:FF:000265">
    <property type="entry name" value="periodic tryptophan protein 2 homolog"/>
    <property type="match status" value="1"/>
</dbReference>
<dbReference type="Gene3D" id="2.130.10.10">
    <property type="entry name" value="YVTN repeat-like/Quinoprotein amine dehydrogenase"/>
    <property type="match status" value="3"/>
</dbReference>
<dbReference type="InterPro" id="IPR020472">
    <property type="entry name" value="G-protein_beta_WD-40_rep"/>
</dbReference>
<dbReference type="InterPro" id="IPR027145">
    <property type="entry name" value="PWP2"/>
</dbReference>
<dbReference type="InterPro" id="IPR011047">
    <property type="entry name" value="Quinoprotein_ADH-like_sf"/>
</dbReference>
<dbReference type="InterPro" id="IPR007148">
    <property type="entry name" value="SSU_processome_Utp12"/>
</dbReference>
<dbReference type="InterPro" id="IPR015943">
    <property type="entry name" value="WD40/YVTN_repeat-like_dom_sf"/>
</dbReference>
<dbReference type="InterPro" id="IPR019775">
    <property type="entry name" value="WD40_repeat_CS"/>
</dbReference>
<dbReference type="InterPro" id="IPR001680">
    <property type="entry name" value="WD40_rpt"/>
</dbReference>
<dbReference type="PANTHER" id="PTHR19858:SF0">
    <property type="entry name" value="PERIODIC TRYPTOPHAN PROTEIN 2 HOMOLOG"/>
    <property type="match status" value="1"/>
</dbReference>
<dbReference type="PANTHER" id="PTHR19858">
    <property type="entry name" value="WD40 REPEAT PROTEIN"/>
    <property type="match status" value="1"/>
</dbReference>
<dbReference type="Pfam" id="PF04003">
    <property type="entry name" value="Utp12"/>
    <property type="match status" value="1"/>
</dbReference>
<dbReference type="Pfam" id="PF00400">
    <property type="entry name" value="WD40"/>
    <property type="match status" value="3"/>
</dbReference>
<dbReference type="PRINTS" id="PR00320">
    <property type="entry name" value="GPROTEINBRPT"/>
</dbReference>
<dbReference type="SMART" id="SM00320">
    <property type="entry name" value="WD40"/>
    <property type="match status" value="13"/>
</dbReference>
<dbReference type="SUPFAM" id="SSF50998">
    <property type="entry name" value="Quinoprotein alcohol dehydrogenase-like"/>
    <property type="match status" value="2"/>
</dbReference>
<dbReference type="PROSITE" id="PS00678">
    <property type="entry name" value="WD_REPEATS_1"/>
    <property type="match status" value="2"/>
</dbReference>
<dbReference type="PROSITE" id="PS50082">
    <property type="entry name" value="WD_REPEATS_2"/>
    <property type="match status" value="4"/>
</dbReference>
<dbReference type="PROSITE" id="PS50294">
    <property type="entry name" value="WD_REPEATS_REGION"/>
    <property type="match status" value="2"/>
</dbReference>
<gene>
    <name type="primary">Pwp2</name>
    <name type="synonym">Pwp2h</name>
</gene>
<name>PWP2_MOUSE</name>
<keyword id="KW-0007">Acetylation</keyword>
<keyword id="KW-0539">Nucleus</keyword>
<keyword id="KW-0597">Phosphoprotein</keyword>
<keyword id="KW-1185">Reference proteome</keyword>
<keyword id="KW-0677">Repeat</keyword>
<keyword id="KW-0853">WD repeat</keyword>
<accession>Q8BU03</accession>
<accession>Q8BTR0</accession>
<comment type="function">
    <text evidence="1">Part of the small subunit (SSU) processome, first precursor of the small eukaryotic ribosomal subunit. During the assembly of the SSU processome in the nucleolus, many ribosome biogenesis factors, an RNA chaperone and ribosomal proteins associate with the nascent pre-rRNA and work in concert to generate RNA folding, modifications, rearrangements and cleavage as well as targeted degradation of pre-ribosomal RNA by the RNA exosome.</text>
</comment>
<comment type="subunit">
    <text evidence="1">Part of the small subunit (SSU) processome, composed of more than 70 proteins and the RNA chaperone small nucleolar RNA (snoRNA) U3.</text>
</comment>
<comment type="subcellular location">
    <subcellularLocation>
        <location evidence="1">Nucleus</location>
        <location evidence="1">Nucleolus</location>
    </subcellularLocation>
</comment>
<comment type="similarity">
    <text evidence="3">Belongs to the WD repeat PWP2 family.</text>
</comment>
<feature type="chain" id="PRO_0000051176" description="Periodic tryptophan protein 2 homolog">
    <location>
        <begin position="1"/>
        <end position="919"/>
    </location>
</feature>
<feature type="repeat" description="WD 1">
    <location>
        <begin position="12"/>
        <end position="50"/>
    </location>
</feature>
<feature type="repeat" description="WD 2">
    <location>
        <begin position="53"/>
        <end position="93"/>
    </location>
</feature>
<feature type="repeat" description="WD 3">
    <location>
        <begin position="94"/>
        <end position="132"/>
    </location>
</feature>
<feature type="repeat" description="WD 4">
    <location>
        <begin position="142"/>
        <end position="181"/>
    </location>
</feature>
<feature type="repeat" description="WD 5">
    <location>
        <begin position="186"/>
        <end position="225"/>
    </location>
</feature>
<feature type="repeat" description="WD 6">
    <location>
        <begin position="286"/>
        <end position="325"/>
    </location>
</feature>
<feature type="repeat" description="WD 7">
    <location>
        <begin position="328"/>
        <end position="368"/>
    </location>
</feature>
<feature type="repeat" description="WD 8">
    <location>
        <begin position="371"/>
        <end position="410"/>
    </location>
</feature>
<feature type="repeat" description="WD 9">
    <location>
        <begin position="413"/>
        <end position="452"/>
    </location>
</feature>
<feature type="repeat" description="WD 10">
    <location>
        <begin position="456"/>
        <end position="498"/>
    </location>
</feature>
<feature type="repeat" description="WD 11">
    <location>
        <begin position="499"/>
        <end position="538"/>
    </location>
</feature>
<feature type="repeat" description="WD 12">
    <location>
        <begin position="541"/>
        <end position="580"/>
    </location>
</feature>
<feature type="repeat" description="WD 13">
    <location>
        <begin position="603"/>
        <end position="642"/>
    </location>
</feature>
<feature type="repeat" description="WD 14">
    <location>
        <begin position="700"/>
        <end position="740"/>
    </location>
</feature>
<feature type="region of interest" description="Disordered" evidence="2">
    <location>
        <begin position="238"/>
        <end position="266"/>
    </location>
</feature>
<feature type="region of interest" description="Disordered" evidence="2">
    <location>
        <begin position="885"/>
        <end position="919"/>
    </location>
</feature>
<feature type="compositionally biased region" description="Acidic residues" evidence="2">
    <location>
        <begin position="242"/>
        <end position="252"/>
    </location>
</feature>
<feature type="compositionally biased region" description="Acidic residues" evidence="2">
    <location>
        <begin position="889"/>
        <end position="900"/>
    </location>
</feature>
<feature type="modified residue" description="N6-acetyllysine" evidence="6">
    <location>
        <position position="55"/>
    </location>
</feature>
<feature type="modified residue" description="Phosphothreonine" evidence="5">
    <location>
        <position position="891"/>
    </location>
</feature>
<feature type="modified residue" description="Phosphoserine" evidence="4 5">
    <location>
        <position position="895"/>
    </location>
</feature>
<feature type="modified residue" description="Phosphoserine" evidence="5">
    <location>
        <position position="898"/>
    </location>
</feature>
<feature type="modified residue" description="Phosphoserine" evidence="5">
    <location>
        <position position="902"/>
    </location>
</feature>
<feature type="sequence conflict" description="In Ref. 1; BAC40686." evidence="3" ref="1">
    <original>D</original>
    <variation>H</variation>
    <location>
        <position position="202"/>
    </location>
</feature>
<organism>
    <name type="scientific">Mus musculus</name>
    <name type="common">Mouse</name>
    <dbReference type="NCBI Taxonomy" id="10090"/>
    <lineage>
        <taxon>Eukaryota</taxon>
        <taxon>Metazoa</taxon>
        <taxon>Chordata</taxon>
        <taxon>Craniata</taxon>
        <taxon>Vertebrata</taxon>
        <taxon>Euteleostomi</taxon>
        <taxon>Mammalia</taxon>
        <taxon>Eutheria</taxon>
        <taxon>Euarchontoglires</taxon>
        <taxon>Glires</taxon>
        <taxon>Rodentia</taxon>
        <taxon>Myomorpha</taxon>
        <taxon>Muroidea</taxon>
        <taxon>Muridae</taxon>
        <taxon>Murinae</taxon>
        <taxon>Mus</taxon>
        <taxon>Mus</taxon>
    </lineage>
</organism>